<keyword id="KW-0165">Cleavage on pair of basic residues</keyword>
<keyword id="KW-1015">Disulfide bond</keyword>
<keyword id="KW-0382">Hypotensive agent</keyword>
<keyword id="KW-0481">Metalloenzyme inhibitor</keyword>
<keyword id="KW-0483">Metalloprotease inhibitor</keyword>
<keyword id="KW-0646">Protease inhibitor</keyword>
<keyword id="KW-0873">Pyrrolidone carboxylic acid</keyword>
<keyword id="KW-0964">Secreted</keyword>
<keyword id="KW-0732">Signal</keyword>
<keyword id="KW-0800">Toxin</keyword>
<keyword id="KW-0838">Vasoactive</keyword>
<keyword id="KW-0840">Vasodilator</keyword>
<reference key="1">
    <citation type="journal article" date="2007" name="BMC Mol. Biol.">
        <title>The venom gland transcriptome of the Desert Massasauga rattlesnake (Sistrurus catenatus edwardsii): towards an understanding of venom composition among advanced snakes (Superfamily Colubroidea).</title>
        <authorList>
            <person name="Pahari S."/>
            <person name="Mackessy S.P."/>
            <person name="Kini R.M."/>
        </authorList>
    </citation>
    <scope>NUCLEOTIDE SEQUENCE [LARGE SCALE MRNA]</scope>
    <source>
        <tissue>Venom gland</tissue>
    </source>
</reference>
<reference key="2">
    <citation type="journal article" date="2002" name="Biochemistry">
        <title>Selective inhibition of the C-domain of angiotensin I converting enzyme by bradykinin potentiating peptides.</title>
        <authorList>
            <person name="Cotton J."/>
            <person name="Hayashi M.A."/>
            <person name="Cuniasse P."/>
            <person name="Vazeux G."/>
            <person name="Ianzer D."/>
            <person name="De Camargo A.C."/>
            <person name="Dive V."/>
        </authorList>
    </citation>
    <scope>SYNTHESIS OF 48-57</scope>
    <scope>FUNCTION</scope>
</reference>
<dbReference type="EMBL" id="DQ464265">
    <property type="protein sequence ID" value="ABG26994.1"/>
    <property type="molecule type" value="mRNA"/>
</dbReference>
<dbReference type="GO" id="GO:0005576">
    <property type="term" value="C:extracellular region"/>
    <property type="evidence" value="ECO:0007669"/>
    <property type="project" value="UniProtKB-SubCell"/>
</dbReference>
<dbReference type="GO" id="GO:0005179">
    <property type="term" value="F:hormone activity"/>
    <property type="evidence" value="ECO:0007669"/>
    <property type="project" value="InterPro"/>
</dbReference>
<dbReference type="GO" id="GO:0030414">
    <property type="term" value="F:peptidase inhibitor activity"/>
    <property type="evidence" value="ECO:0007669"/>
    <property type="project" value="UniProtKB-KW"/>
</dbReference>
<dbReference type="GO" id="GO:0090729">
    <property type="term" value="F:toxin activity"/>
    <property type="evidence" value="ECO:0007669"/>
    <property type="project" value="UniProtKB-KW"/>
</dbReference>
<dbReference type="GO" id="GO:0006182">
    <property type="term" value="P:cGMP biosynthetic process"/>
    <property type="evidence" value="ECO:0007669"/>
    <property type="project" value="TreeGrafter"/>
</dbReference>
<dbReference type="GO" id="GO:0007168">
    <property type="term" value="P:receptor guanylyl cyclase signaling pathway"/>
    <property type="evidence" value="ECO:0007669"/>
    <property type="project" value="TreeGrafter"/>
</dbReference>
<dbReference type="GO" id="GO:0008217">
    <property type="term" value="P:regulation of blood pressure"/>
    <property type="evidence" value="ECO:0007669"/>
    <property type="project" value="UniProtKB-KW"/>
</dbReference>
<dbReference type="GO" id="GO:0042311">
    <property type="term" value="P:vasodilation"/>
    <property type="evidence" value="ECO:0007669"/>
    <property type="project" value="UniProtKB-KW"/>
</dbReference>
<dbReference type="InterPro" id="IPR000663">
    <property type="entry name" value="Natr_peptide"/>
</dbReference>
<dbReference type="InterPro" id="IPR030480">
    <property type="entry name" value="Natr_peptide_CS"/>
</dbReference>
<dbReference type="PANTHER" id="PTHR12167">
    <property type="entry name" value="C-TYPE NATRIURETIC PEPTIDE"/>
    <property type="match status" value="1"/>
</dbReference>
<dbReference type="PANTHER" id="PTHR12167:SF2">
    <property type="entry name" value="C-TYPE NATRIURETIC PEPTIDE"/>
    <property type="match status" value="1"/>
</dbReference>
<dbReference type="Pfam" id="PF00212">
    <property type="entry name" value="ANP"/>
    <property type="match status" value="1"/>
</dbReference>
<dbReference type="PRINTS" id="PR00710">
    <property type="entry name" value="NATPEPTIDES"/>
</dbReference>
<dbReference type="SMART" id="SM00183">
    <property type="entry name" value="NAT_PEP"/>
    <property type="match status" value="1"/>
</dbReference>
<dbReference type="PROSITE" id="PS00263">
    <property type="entry name" value="NATRIURETIC_PEPTIDE"/>
    <property type="match status" value="1"/>
</dbReference>
<accession>B0VXV8</accession>
<organism>
    <name type="scientific">Sistrurus catenatus edwardsii</name>
    <name type="common">Desert massasauga</name>
    <name type="synonym">Crotalophorus edwardsii</name>
    <dbReference type="NCBI Taxonomy" id="8762"/>
    <lineage>
        <taxon>Eukaryota</taxon>
        <taxon>Metazoa</taxon>
        <taxon>Chordata</taxon>
        <taxon>Craniata</taxon>
        <taxon>Vertebrata</taxon>
        <taxon>Euteleostomi</taxon>
        <taxon>Lepidosauria</taxon>
        <taxon>Squamata</taxon>
        <taxon>Bifurcata</taxon>
        <taxon>Unidentata</taxon>
        <taxon>Episquamata</taxon>
        <taxon>Toxicofera</taxon>
        <taxon>Serpentes</taxon>
        <taxon>Colubroidea</taxon>
        <taxon>Viperidae</taxon>
        <taxon>Crotalinae</taxon>
        <taxon>Sistrurus</taxon>
    </lineage>
</organism>
<comment type="function">
    <molecule>Bradykinin-potentiating peptide 10c</molecule>
    <text evidence="7">Inhibits the activity of the angiotensin-converting enzyme (ACE) by a preferential interaction with its C-domain. May also potentiate the hypotensive effects of bradykinin.</text>
</comment>
<comment type="function">
    <molecule>Bradykinin inhibitor peptide homolog</molecule>
    <text evidence="1">Antagonizes the vasodilatory actions of bradykinin at the B2 bradykinin receptor.</text>
</comment>
<comment type="function">
    <molecule>C-type natriuretic peptide</molecule>
    <text evidence="2">has a vasorelaxant activity in rat aortic strips and a diuretic potency in anesthetized rats (By similarity). May act by activating natriuretic receptors (NPR1 and/or NPR2).</text>
</comment>
<comment type="subcellular location">
    <subcellularLocation>
        <location evidence="9">Secreted</location>
    </subcellularLocation>
</comment>
<comment type="tissue specificity">
    <text evidence="9">Venom gland.</text>
</comment>
<comment type="similarity">
    <text evidence="8">In the N-terminal section; belongs to the bradykinin-potentiating peptide family.</text>
</comment>
<comment type="similarity">
    <text evidence="8">In the central section; belongs to the bradykinin inhibitor peptide family.</text>
</comment>
<comment type="similarity">
    <text evidence="8">In the C-terminal section; belongs to the natriuretic peptide family.</text>
</comment>
<feature type="signal peptide" evidence="5">
    <location>
        <begin position="1"/>
        <end position="23"/>
    </location>
</feature>
<feature type="propeptide" id="PRO_0000335915" evidence="5">
    <location>
        <begin position="24"/>
        <end position="47"/>
    </location>
</feature>
<feature type="peptide" id="PRO_0000335916" description="Bradykinin-potentiating peptide 10c" evidence="1">
    <location>
        <begin position="48"/>
        <end position="57"/>
    </location>
</feature>
<feature type="propeptide" id="PRO_0000335917" evidence="5">
    <location>
        <begin position="58"/>
        <end position="60"/>
    </location>
</feature>
<feature type="peptide" id="PRO_0000335918" description="Bradykinin-potentiating peptide-2" evidence="1">
    <location>
        <begin position="61"/>
        <end position="66"/>
    </location>
</feature>
<feature type="propeptide" id="PRO_0000335919" evidence="5">
    <location>
        <begin position="67"/>
        <end position="95"/>
    </location>
</feature>
<feature type="peptide" id="PRO_0000335920" description="Bradykinin inhibitor peptide homolog" evidence="1">
    <location>
        <begin position="96"/>
        <end position="106"/>
    </location>
</feature>
<feature type="propeptide" id="PRO_0000335921" evidence="5">
    <location>
        <begin position="107"/>
        <end position="179"/>
    </location>
</feature>
<feature type="peptide" id="PRO_0000335922" description="C-type natriuretic peptide" evidence="4">
    <location>
        <begin position="180"/>
        <end position="201"/>
    </location>
</feature>
<feature type="region of interest" description="Disordered" evidence="6">
    <location>
        <begin position="90"/>
        <end position="172"/>
    </location>
</feature>
<feature type="compositionally biased region" description="Low complexity" evidence="6">
    <location>
        <begin position="120"/>
        <end position="130"/>
    </location>
</feature>
<feature type="compositionally biased region" description="Basic and acidic residues" evidence="6">
    <location>
        <begin position="132"/>
        <end position="142"/>
    </location>
</feature>
<feature type="compositionally biased region" description="Gly residues" evidence="6">
    <location>
        <begin position="159"/>
        <end position="170"/>
    </location>
</feature>
<feature type="modified residue" description="Pyrrolidone carboxylic acid" evidence="1">
    <location>
        <position position="48"/>
    </location>
</feature>
<feature type="modified residue" description="Pyrrolidone carboxylic acid" evidence="1">
    <location>
        <position position="61"/>
    </location>
</feature>
<feature type="disulfide bond" evidence="3">
    <location>
        <begin position="185"/>
        <end position="201"/>
    </location>
</feature>
<sequence length="201" mass="20896">MFVSRLAASGLLLLALLAVSLDGKPVQQWSQNWPGPKVPPLVVQQWSQNWPHPQIPPLVVQNWKSPTQLQPRESPAGGTTALREELSLGPDAALDTPPAGPDVGPRGSKAAAAPQRLSKSKGASATSTASRPMRDLRTDGKQARQNWGRMLNPDHHSAPGGGGGGGGGGARRLKGLAKKRAGSGCFGLKLDRIGSMSGLGC</sequence>
<evidence type="ECO:0000250" key="1"/>
<evidence type="ECO:0000250" key="2">
    <source>
        <dbReference type="UniProtKB" id="P0C7P5"/>
    </source>
</evidence>
<evidence type="ECO:0000250" key="3">
    <source>
        <dbReference type="UniProtKB" id="P0DMD6"/>
    </source>
</evidence>
<evidence type="ECO:0000250" key="4">
    <source>
        <dbReference type="UniProtKB" id="Q27J49"/>
    </source>
</evidence>
<evidence type="ECO:0000255" key="5"/>
<evidence type="ECO:0000256" key="6">
    <source>
        <dbReference type="SAM" id="MobiDB-lite"/>
    </source>
</evidence>
<evidence type="ECO:0000269" key="7">
    <source>
    </source>
</evidence>
<evidence type="ECO:0000305" key="8"/>
<evidence type="ECO:0000305" key="9">
    <source>
    </source>
</evidence>
<name>BNP_SISCA</name>
<protein>
    <recommendedName>
        <fullName>Bradykinin potentiating and C-type natriuretic peptides</fullName>
    </recommendedName>
    <alternativeName>
        <fullName>BPP-CNP</fullName>
    </alternativeName>
    <component>
        <recommendedName>
            <fullName>Bradykinin-potentiating peptide 10c</fullName>
            <shortName>BPP-10c</shortName>
            <shortName>BPP-2</shortName>
        </recommendedName>
        <alternativeName>
            <fullName>Bradykinin-potentiating peptide-1</fullName>
            <shortName>BPP-1</shortName>
        </alternativeName>
    </component>
    <component>
        <recommendedName>
            <fullName>Bradykinin-potentiating peptide-2</fullName>
            <shortName>BPP-2</shortName>
        </recommendedName>
    </component>
    <component>
        <recommendedName>
            <fullName>Bradykinin inhibitor peptide homolog</fullName>
        </recommendedName>
    </component>
    <component>
        <recommendedName>
            <fullName>C-type natriuretic peptide</fullName>
            <shortName>CNP</shortName>
        </recommendedName>
    </component>
</protein>
<proteinExistence type="evidence at transcript level"/>